<dbReference type="EC" id="6.3.5.7" evidence="1"/>
<dbReference type="EMBL" id="AL646052">
    <property type="protein sequence ID" value="CAD13585.1"/>
    <property type="molecule type" value="Genomic_DNA"/>
</dbReference>
<dbReference type="RefSeq" id="WP_011000024.1">
    <property type="nucleotide sequence ID" value="NC_003295.1"/>
</dbReference>
<dbReference type="SMR" id="Q8Y3C3"/>
<dbReference type="STRING" id="267608.RSc0057"/>
<dbReference type="EnsemblBacteria" id="CAD13585">
    <property type="protein sequence ID" value="CAD13585"/>
    <property type="gene ID" value="RSc0057"/>
</dbReference>
<dbReference type="KEGG" id="rso:RSc0057"/>
<dbReference type="eggNOG" id="COG0154">
    <property type="taxonomic scope" value="Bacteria"/>
</dbReference>
<dbReference type="HOGENOM" id="CLU_009600_0_3_4"/>
<dbReference type="Proteomes" id="UP000001436">
    <property type="component" value="Chromosome"/>
</dbReference>
<dbReference type="GO" id="GO:0030956">
    <property type="term" value="C:glutamyl-tRNA(Gln) amidotransferase complex"/>
    <property type="evidence" value="ECO:0007669"/>
    <property type="project" value="InterPro"/>
</dbReference>
<dbReference type="GO" id="GO:0005524">
    <property type="term" value="F:ATP binding"/>
    <property type="evidence" value="ECO:0007669"/>
    <property type="project" value="UniProtKB-KW"/>
</dbReference>
<dbReference type="GO" id="GO:0050567">
    <property type="term" value="F:glutaminyl-tRNA synthase (glutamine-hydrolyzing) activity"/>
    <property type="evidence" value="ECO:0007669"/>
    <property type="project" value="UniProtKB-UniRule"/>
</dbReference>
<dbReference type="GO" id="GO:0006412">
    <property type="term" value="P:translation"/>
    <property type="evidence" value="ECO:0007669"/>
    <property type="project" value="UniProtKB-UniRule"/>
</dbReference>
<dbReference type="Gene3D" id="3.90.1300.10">
    <property type="entry name" value="Amidase signature (AS) domain"/>
    <property type="match status" value="1"/>
</dbReference>
<dbReference type="HAMAP" id="MF_00120">
    <property type="entry name" value="GatA"/>
    <property type="match status" value="1"/>
</dbReference>
<dbReference type="InterPro" id="IPR000120">
    <property type="entry name" value="Amidase"/>
</dbReference>
<dbReference type="InterPro" id="IPR020556">
    <property type="entry name" value="Amidase_CS"/>
</dbReference>
<dbReference type="InterPro" id="IPR023631">
    <property type="entry name" value="Amidase_dom"/>
</dbReference>
<dbReference type="InterPro" id="IPR036928">
    <property type="entry name" value="AS_sf"/>
</dbReference>
<dbReference type="InterPro" id="IPR004412">
    <property type="entry name" value="GatA"/>
</dbReference>
<dbReference type="NCBIfam" id="TIGR00132">
    <property type="entry name" value="gatA"/>
    <property type="match status" value="1"/>
</dbReference>
<dbReference type="PANTHER" id="PTHR11895:SF151">
    <property type="entry name" value="GLUTAMYL-TRNA(GLN) AMIDOTRANSFERASE SUBUNIT A"/>
    <property type="match status" value="1"/>
</dbReference>
<dbReference type="PANTHER" id="PTHR11895">
    <property type="entry name" value="TRANSAMIDASE"/>
    <property type="match status" value="1"/>
</dbReference>
<dbReference type="Pfam" id="PF01425">
    <property type="entry name" value="Amidase"/>
    <property type="match status" value="1"/>
</dbReference>
<dbReference type="SUPFAM" id="SSF75304">
    <property type="entry name" value="Amidase signature (AS) enzymes"/>
    <property type="match status" value="1"/>
</dbReference>
<dbReference type="PROSITE" id="PS00571">
    <property type="entry name" value="AMIDASES"/>
    <property type="match status" value="1"/>
</dbReference>
<organism>
    <name type="scientific">Ralstonia nicotianae (strain ATCC BAA-1114 / GMI1000)</name>
    <name type="common">Ralstonia solanacearum</name>
    <dbReference type="NCBI Taxonomy" id="267608"/>
    <lineage>
        <taxon>Bacteria</taxon>
        <taxon>Pseudomonadati</taxon>
        <taxon>Pseudomonadota</taxon>
        <taxon>Betaproteobacteria</taxon>
        <taxon>Burkholderiales</taxon>
        <taxon>Burkholderiaceae</taxon>
        <taxon>Ralstonia</taxon>
        <taxon>Ralstonia solanacearum species complex</taxon>
    </lineage>
</organism>
<proteinExistence type="inferred from homology"/>
<accession>Q8Y3C3</accession>
<comment type="function">
    <text evidence="1">Allows the formation of correctly charged Gln-tRNA(Gln) through the transamidation of misacylated Glu-tRNA(Gln) in organisms which lack glutaminyl-tRNA synthetase. The reaction takes place in the presence of glutamine and ATP through an activated gamma-phospho-Glu-tRNA(Gln).</text>
</comment>
<comment type="catalytic activity">
    <reaction evidence="1">
        <text>L-glutamyl-tRNA(Gln) + L-glutamine + ATP + H2O = L-glutaminyl-tRNA(Gln) + L-glutamate + ADP + phosphate + H(+)</text>
        <dbReference type="Rhea" id="RHEA:17521"/>
        <dbReference type="Rhea" id="RHEA-COMP:9681"/>
        <dbReference type="Rhea" id="RHEA-COMP:9684"/>
        <dbReference type="ChEBI" id="CHEBI:15377"/>
        <dbReference type="ChEBI" id="CHEBI:15378"/>
        <dbReference type="ChEBI" id="CHEBI:29985"/>
        <dbReference type="ChEBI" id="CHEBI:30616"/>
        <dbReference type="ChEBI" id="CHEBI:43474"/>
        <dbReference type="ChEBI" id="CHEBI:58359"/>
        <dbReference type="ChEBI" id="CHEBI:78520"/>
        <dbReference type="ChEBI" id="CHEBI:78521"/>
        <dbReference type="ChEBI" id="CHEBI:456216"/>
        <dbReference type="EC" id="6.3.5.7"/>
    </reaction>
</comment>
<comment type="subunit">
    <text evidence="1">Heterotrimer of A, B and C subunits.</text>
</comment>
<comment type="similarity">
    <text evidence="1">Belongs to the amidase family. GatA subfamily.</text>
</comment>
<protein>
    <recommendedName>
        <fullName evidence="1">Glutamyl-tRNA(Gln) amidotransferase subunit A</fullName>
        <shortName evidence="1">Glu-ADT subunit A</shortName>
        <ecNumber evidence="1">6.3.5.7</ecNumber>
    </recommendedName>
</protein>
<keyword id="KW-0067">ATP-binding</keyword>
<keyword id="KW-0436">Ligase</keyword>
<keyword id="KW-0547">Nucleotide-binding</keyword>
<keyword id="KW-0648">Protein biosynthesis</keyword>
<keyword id="KW-1185">Reference proteome</keyword>
<evidence type="ECO:0000255" key="1">
    <source>
        <dbReference type="HAMAP-Rule" id="MF_00120"/>
    </source>
</evidence>
<feature type="chain" id="PRO_0000105192" description="Glutamyl-tRNA(Gln) amidotransferase subunit A">
    <location>
        <begin position="1"/>
        <end position="495"/>
    </location>
</feature>
<feature type="active site" description="Charge relay system" evidence="1">
    <location>
        <position position="75"/>
    </location>
</feature>
<feature type="active site" description="Charge relay system" evidence="1">
    <location>
        <position position="150"/>
    </location>
</feature>
<feature type="active site" description="Acyl-ester intermediate" evidence="1">
    <location>
        <position position="174"/>
    </location>
</feature>
<sequence length="495" mass="52356">MTASTLKTLSAQLAAKEVSAVELARHYLARIEARADLNAFIHVDPEATLAQAQAADARLAAGDAGPLAGIPIAHKDVFVTRGWRATAGSKMLDSYVSPFDATVVERLAAAGMVTLGKTNMDEFAMGSSNENSHFGPVKNPWDVARVPGGSSGGSAAAVAADLAPAATGTDTGGSIRQPASFSGITGIKPTYGRVSRYGMIAFASSLDQGGPMARTAEDCALLLSAMAGFDARDSTSLEPGRGGDAEDFGRLLGRPLEGADAARPLAGLRIGLPQEYFGAGLADDVRTAVRAALAELETLGATLVDISLPKTELSIPTYYVIAPAEASSNLSRFDGVRYGHRAAAYRDLADMYRKTRAEGFGWEVKRRILVGTYVLSHGYYDAYYLQAQKIRRIIAQDFQNAFGQCDVIMGPVAPTVAWKLGEKTDDPLQMYLADIFTLSTSLAGLPGMSVPAGFGANGLPVGLQIIGNYFEEARMLQIAHAFQQATDWHTRRPAA</sequence>
<reference key="1">
    <citation type="journal article" date="2002" name="Nature">
        <title>Genome sequence of the plant pathogen Ralstonia solanacearum.</title>
        <authorList>
            <person name="Salanoubat M."/>
            <person name="Genin S."/>
            <person name="Artiguenave F."/>
            <person name="Gouzy J."/>
            <person name="Mangenot S."/>
            <person name="Arlat M."/>
            <person name="Billault A."/>
            <person name="Brottier P."/>
            <person name="Camus J.-C."/>
            <person name="Cattolico L."/>
            <person name="Chandler M."/>
            <person name="Choisne N."/>
            <person name="Claudel-Renard C."/>
            <person name="Cunnac S."/>
            <person name="Demange N."/>
            <person name="Gaspin C."/>
            <person name="Lavie M."/>
            <person name="Moisan A."/>
            <person name="Robert C."/>
            <person name="Saurin W."/>
            <person name="Schiex T."/>
            <person name="Siguier P."/>
            <person name="Thebault P."/>
            <person name="Whalen M."/>
            <person name="Wincker P."/>
            <person name="Levy M."/>
            <person name="Weissenbach J."/>
            <person name="Boucher C.A."/>
        </authorList>
    </citation>
    <scope>NUCLEOTIDE SEQUENCE [LARGE SCALE GENOMIC DNA]</scope>
    <source>
        <strain>ATCC BAA-1114 / GMI1000</strain>
    </source>
</reference>
<name>GATA_RALN1</name>
<gene>
    <name evidence="1" type="primary">gatA</name>
    <name type="ordered locus">RSc0057</name>
    <name type="ORF">RS01880</name>
</gene>